<proteinExistence type="evidence at protein level"/>
<sequence>MAPQQKGKQGTKGAKQIVEENKTTLTFYRNMAIGCAAPALLLSFLVFEVTKTSVFMHILSLLILGSSYQFMAFMSQAKYSESGALLDSGNDLNMEGGIAENVKDLIILTSGTLLLALISNYFWLVLLLAPIRAGWMLWGSVIQPWLSQRNAQDDNPQVDEKKQKKMDRRMRRMR</sequence>
<comment type="function">
    <text evidence="3">May play an important role during development and helps to maintain proper levels of Fz.</text>
</comment>
<comment type="subunit">
    <text evidence="3">Interacts with fz.</text>
</comment>
<comment type="subcellular location">
    <subcellularLocation>
        <location evidence="3">Endoplasmic reticulum membrane</location>
        <topology evidence="1">Multi-pass membrane protein</topology>
    </subcellularLocation>
</comment>
<comment type="tissue specificity">
    <text evidence="3">Expressed in the brain.</text>
</comment>
<comment type="developmental stage">
    <text evidence="3">Expressed in larval, pupal, and adult stages. In the 3rd instar larvae, broadly expressed in almost all tissues including wing disk, leg disk, eye disk, brain, salivary gland, anterior gut, fat body and Malpighian tubules.</text>
</comment>
<comment type="disruption phenotype">
    <text evidence="3">Results in lethality and the few escapers show a significantly reduced life span as well as defective leg, eye and wing development. Exhibit PCP-like defects in the eyes and wings and display a modest but consistent ER stress response.</text>
</comment>
<comment type="similarity">
    <text evidence="5">Belongs to the TMEM208 family.</text>
</comment>
<feature type="chain" id="PRO_0000461083" description="Transmembrane protein 208">
    <location>
        <begin position="1"/>
        <end position="174"/>
    </location>
</feature>
<feature type="transmembrane region" description="Helical" evidence="1">
    <location>
        <begin position="30"/>
        <end position="50"/>
    </location>
</feature>
<feature type="transmembrane region" description="Helical" evidence="1">
    <location>
        <begin position="54"/>
        <end position="74"/>
    </location>
</feature>
<feature type="transmembrane region" description="Helical" evidence="1">
    <location>
        <begin position="111"/>
        <end position="131"/>
    </location>
</feature>
<feature type="region of interest" description="Disordered" evidence="2">
    <location>
        <begin position="151"/>
        <end position="174"/>
    </location>
</feature>
<feature type="compositionally biased region" description="Basic residues" evidence="2">
    <location>
        <begin position="163"/>
        <end position="174"/>
    </location>
</feature>
<feature type="sequence conflict" description="In Ref. 3; AAL48551." evidence="5" ref="3">
    <original>R</original>
    <variation>S</variation>
    <location>
        <position position="174"/>
    </location>
</feature>
<name>TM208_DROME</name>
<accession>A1ZA77</accession>
<accession>Q8SZE6</accession>
<organism evidence="7">
    <name type="scientific">Drosophila melanogaster</name>
    <name type="common">Fruit fly</name>
    <dbReference type="NCBI Taxonomy" id="7227"/>
    <lineage>
        <taxon>Eukaryota</taxon>
        <taxon>Metazoa</taxon>
        <taxon>Ecdysozoa</taxon>
        <taxon>Arthropoda</taxon>
        <taxon>Hexapoda</taxon>
        <taxon>Insecta</taxon>
        <taxon>Pterygota</taxon>
        <taxon>Neoptera</taxon>
        <taxon>Endopterygota</taxon>
        <taxon>Diptera</taxon>
        <taxon>Brachycera</taxon>
        <taxon>Muscomorpha</taxon>
        <taxon>Ephydroidea</taxon>
        <taxon>Drosophilidae</taxon>
        <taxon>Drosophila</taxon>
        <taxon>Sophophora</taxon>
    </lineage>
</organism>
<gene>
    <name evidence="4 6" type="primary">Tmem208</name>
    <name evidence="6" type="ORF">CG8320</name>
</gene>
<protein>
    <recommendedName>
        <fullName evidence="6">Transmembrane protein 208</fullName>
    </recommendedName>
</protein>
<dbReference type="EMBL" id="AE013599">
    <property type="protein sequence ID" value="AAF58083.1"/>
    <property type="molecule type" value="Genomic_DNA"/>
</dbReference>
<dbReference type="EMBL" id="AY070929">
    <property type="protein sequence ID" value="AAL48551.1"/>
    <property type="molecule type" value="mRNA"/>
</dbReference>
<dbReference type="EMBL" id="BT044328">
    <property type="protein sequence ID" value="ACH92393.1"/>
    <property type="molecule type" value="mRNA"/>
</dbReference>
<dbReference type="RefSeq" id="NP_611072.2">
    <property type="nucleotide sequence ID" value="NM_137228.4"/>
</dbReference>
<dbReference type="FunCoup" id="A1ZA77">
    <property type="interactions" value="77"/>
</dbReference>
<dbReference type="IntAct" id="A1ZA77">
    <property type="interactions" value="10"/>
</dbReference>
<dbReference type="STRING" id="7227.FBpp0086344"/>
<dbReference type="PaxDb" id="7227-FBpp0086344"/>
<dbReference type="DNASU" id="36759"/>
<dbReference type="EnsemblMetazoa" id="FBtr0087202">
    <property type="protein sequence ID" value="FBpp0086344"/>
    <property type="gene ID" value="FBgn0034059"/>
</dbReference>
<dbReference type="GeneID" id="36759"/>
<dbReference type="KEGG" id="dme:Dmel_CG8320"/>
<dbReference type="UCSC" id="CG8320-RA">
    <property type="organism name" value="d. melanogaster"/>
</dbReference>
<dbReference type="AGR" id="FB:FBgn0034059"/>
<dbReference type="FlyBase" id="FBgn0034059">
    <property type="gene designation" value="Tmem208"/>
</dbReference>
<dbReference type="VEuPathDB" id="VectorBase:FBgn0034059"/>
<dbReference type="eggNOG" id="KOG3269">
    <property type="taxonomic scope" value="Eukaryota"/>
</dbReference>
<dbReference type="GeneTree" id="ENSGT00390000008139"/>
<dbReference type="HOGENOM" id="CLU_094308_3_0_1"/>
<dbReference type="InParanoid" id="A1ZA77"/>
<dbReference type="OMA" id="PIRAGWM"/>
<dbReference type="OrthoDB" id="10012212at2759"/>
<dbReference type="BioGRID-ORCS" id="36759">
    <property type="hits" value="0 hits in 1 CRISPR screen"/>
</dbReference>
<dbReference type="GenomeRNAi" id="36759"/>
<dbReference type="Proteomes" id="UP000000803">
    <property type="component" value="Chromosome 2R"/>
</dbReference>
<dbReference type="Bgee" id="FBgn0034059">
    <property type="expression patterns" value="Expressed in spermatid in male reproductive gland and 131 other cell types or tissues"/>
</dbReference>
<dbReference type="ExpressionAtlas" id="A1ZA77">
    <property type="expression patterns" value="baseline and differential"/>
</dbReference>
<dbReference type="GO" id="GO:0005789">
    <property type="term" value="C:endoplasmic reticulum membrane"/>
    <property type="evidence" value="ECO:0000314"/>
    <property type="project" value="FlyBase"/>
</dbReference>
<dbReference type="GO" id="GO:0043231">
    <property type="term" value="C:intracellular membrane-bounded organelle"/>
    <property type="evidence" value="ECO:0000318"/>
    <property type="project" value="GO_Central"/>
</dbReference>
<dbReference type="GO" id="GO:0005773">
    <property type="term" value="C:vacuole"/>
    <property type="evidence" value="ECO:0007669"/>
    <property type="project" value="GOC"/>
</dbReference>
<dbReference type="GO" id="GO:0005102">
    <property type="term" value="F:signaling receptor binding"/>
    <property type="evidence" value="ECO:0000353"/>
    <property type="project" value="FlyBase"/>
</dbReference>
<dbReference type="GO" id="GO:0090251">
    <property type="term" value="P:protein localization involved in establishment of planar polarity"/>
    <property type="evidence" value="ECO:0000314"/>
    <property type="project" value="FlyBase"/>
</dbReference>
<dbReference type="GO" id="GO:0006624">
    <property type="term" value="P:vacuolar protein processing"/>
    <property type="evidence" value="ECO:0000318"/>
    <property type="project" value="GO_Central"/>
</dbReference>
<dbReference type="InterPro" id="IPR008506">
    <property type="entry name" value="SND2/TMEM208"/>
</dbReference>
<dbReference type="PANTHER" id="PTHR13505">
    <property type="entry name" value="TRANSMEMBRANE PROTEIN 208"/>
    <property type="match status" value="1"/>
</dbReference>
<dbReference type="PANTHER" id="PTHR13505:SF7">
    <property type="entry name" value="TRANSMEMBRANE PROTEIN 208"/>
    <property type="match status" value="1"/>
</dbReference>
<dbReference type="Pfam" id="PF05620">
    <property type="entry name" value="TMEM208_SND2"/>
    <property type="match status" value="1"/>
</dbReference>
<evidence type="ECO:0000255" key="1"/>
<evidence type="ECO:0000256" key="2">
    <source>
        <dbReference type="SAM" id="MobiDB-lite"/>
    </source>
</evidence>
<evidence type="ECO:0000269" key="3">
    <source>
    </source>
</evidence>
<evidence type="ECO:0000303" key="4">
    <source>
    </source>
</evidence>
<evidence type="ECO:0000305" key="5"/>
<evidence type="ECO:0000312" key="6">
    <source>
        <dbReference type="FlyBase" id="FBgn0034059"/>
    </source>
</evidence>
<evidence type="ECO:0000312" key="7">
    <source>
        <dbReference type="Proteomes" id="UP000000803"/>
    </source>
</evidence>
<reference key="1">
    <citation type="journal article" date="2000" name="Science">
        <title>The genome sequence of Drosophila melanogaster.</title>
        <authorList>
            <person name="Adams M.D."/>
            <person name="Celniker S.E."/>
            <person name="Holt R.A."/>
            <person name="Evans C.A."/>
            <person name="Gocayne J.D."/>
            <person name="Amanatides P.G."/>
            <person name="Scherer S.E."/>
            <person name="Li P.W."/>
            <person name="Hoskins R.A."/>
            <person name="Galle R.F."/>
            <person name="George R.A."/>
            <person name="Lewis S.E."/>
            <person name="Richards S."/>
            <person name="Ashburner M."/>
            <person name="Henderson S.N."/>
            <person name="Sutton G.G."/>
            <person name="Wortman J.R."/>
            <person name="Yandell M.D."/>
            <person name="Zhang Q."/>
            <person name="Chen L.X."/>
            <person name="Brandon R.C."/>
            <person name="Rogers Y.-H.C."/>
            <person name="Blazej R.G."/>
            <person name="Champe M."/>
            <person name="Pfeiffer B.D."/>
            <person name="Wan K.H."/>
            <person name="Doyle C."/>
            <person name="Baxter E.G."/>
            <person name="Helt G."/>
            <person name="Nelson C.R."/>
            <person name="Miklos G.L.G."/>
            <person name="Abril J.F."/>
            <person name="Agbayani A."/>
            <person name="An H.-J."/>
            <person name="Andrews-Pfannkoch C."/>
            <person name="Baldwin D."/>
            <person name="Ballew R.M."/>
            <person name="Basu A."/>
            <person name="Baxendale J."/>
            <person name="Bayraktaroglu L."/>
            <person name="Beasley E.M."/>
            <person name="Beeson K.Y."/>
            <person name="Benos P.V."/>
            <person name="Berman B.P."/>
            <person name="Bhandari D."/>
            <person name="Bolshakov S."/>
            <person name="Borkova D."/>
            <person name="Botchan M.R."/>
            <person name="Bouck J."/>
            <person name="Brokstein P."/>
            <person name="Brottier P."/>
            <person name="Burtis K.C."/>
            <person name="Busam D.A."/>
            <person name="Butler H."/>
            <person name="Cadieu E."/>
            <person name="Center A."/>
            <person name="Chandra I."/>
            <person name="Cherry J.M."/>
            <person name="Cawley S."/>
            <person name="Dahlke C."/>
            <person name="Davenport L.B."/>
            <person name="Davies P."/>
            <person name="de Pablos B."/>
            <person name="Delcher A."/>
            <person name="Deng Z."/>
            <person name="Mays A.D."/>
            <person name="Dew I."/>
            <person name="Dietz S.M."/>
            <person name="Dodson K."/>
            <person name="Doup L.E."/>
            <person name="Downes M."/>
            <person name="Dugan-Rocha S."/>
            <person name="Dunkov B.C."/>
            <person name="Dunn P."/>
            <person name="Durbin K.J."/>
            <person name="Evangelista C.C."/>
            <person name="Ferraz C."/>
            <person name="Ferriera S."/>
            <person name="Fleischmann W."/>
            <person name="Fosler C."/>
            <person name="Gabrielian A.E."/>
            <person name="Garg N.S."/>
            <person name="Gelbart W.M."/>
            <person name="Glasser K."/>
            <person name="Glodek A."/>
            <person name="Gong F."/>
            <person name="Gorrell J.H."/>
            <person name="Gu Z."/>
            <person name="Guan P."/>
            <person name="Harris M."/>
            <person name="Harris N.L."/>
            <person name="Harvey D.A."/>
            <person name="Heiman T.J."/>
            <person name="Hernandez J.R."/>
            <person name="Houck J."/>
            <person name="Hostin D."/>
            <person name="Houston K.A."/>
            <person name="Howland T.J."/>
            <person name="Wei M.-H."/>
            <person name="Ibegwam C."/>
            <person name="Jalali M."/>
            <person name="Kalush F."/>
            <person name="Karpen G.H."/>
            <person name="Ke Z."/>
            <person name="Kennison J.A."/>
            <person name="Ketchum K.A."/>
            <person name="Kimmel B.E."/>
            <person name="Kodira C.D."/>
            <person name="Kraft C.L."/>
            <person name="Kravitz S."/>
            <person name="Kulp D."/>
            <person name="Lai Z."/>
            <person name="Lasko P."/>
            <person name="Lei Y."/>
            <person name="Levitsky A.A."/>
            <person name="Li J.H."/>
            <person name="Li Z."/>
            <person name="Liang Y."/>
            <person name="Lin X."/>
            <person name="Liu X."/>
            <person name="Mattei B."/>
            <person name="McIntosh T.C."/>
            <person name="McLeod M.P."/>
            <person name="McPherson D."/>
            <person name="Merkulov G."/>
            <person name="Milshina N.V."/>
            <person name="Mobarry C."/>
            <person name="Morris J."/>
            <person name="Moshrefi A."/>
            <person name="Mount S.M."/>
            <person name="Moy M."/>
            <person name="Murphy B."/>
            <person name="Murphy L."/>
            <person name="Muzny D.M."/>
            <person name="Nelson D.L."/>
            <person name="Nelson D.R."/>
            <person name="Nelson K.A."/>
            <person name="Nixon K."/>
            <person name="Nusskern D.R."/>
            <person name="Pacleb J.M."/>
            <person name="Palazzolo M."/>
            <person name="Pittman G.S."/>
            <person name="Pan S."/>
            <person name="Pollard J."/>
            <person name="Puri V."/>
            <person name="Reese M.G."/>
            <person name="Reinert K."/>
            <person name="Remington K."/>
            <person name="Saunders R.D.C."/>
            <person name="Scheeler F."/>
            <person name="Shen H."/>
            <person name="Shue B.C."/>
            <person name="Siden-Kiamos I."/>
            <person name="Simpson M."/>
            <person name="Skupski M.P."/>
            <person name="Smith T.J."/>
            <person name="Spier E."/>
            <person name="Spradling A.C."/>
            <person name="Stapleton M."/>
            <person name="Strong R."/>
            <person name="Sun E."/>
            <person name="Svirskas R."/>
            <person name="Tector C."/>
            <person name="Turner R."/>
            <person name="Venter E."/>
            <person name="Wang A.H."/>
            <person name="Wang X."/>
            <person name="Wang Z.-Y."/>
            <person name="Wassarman D.A."/>
            <person name="Weinstock G.M."/>
            <person name="Weissenbach J."/>
            <person name="Williams S.M."/>
            <person name="Woodage T."/>
            <person name="Worley K.C."/>
            <person name="Wu D."/>
            <person name="Yang S."/>
            <person name="Yao Q.A."/>
            <person name="Ye J."/>
            <person name="Yeh R.-F."/>
            <person name="Zaveri J.S."/>
            <person name="Zhan M."/>
            <person name="Zhang G."/>
            <person name="Zhao Q."/>
            <person name="Zheng L."/>
            <person name="Zheng X.H."/>
            <person name="Zhong F.N."/>
            <person name="Zhong W."/>
            <person name="Zhou X."/>
            <person name="Zhu S.C."/>
            <person name="Zhu X."/>
            <person name="Smith H.O."/>
            <person name="Gibbs R.A."/>
            <person name="Myers E.W."/>
            <person name="Rubin G.M."/>
            <person name="Venter J.C."/>
        </authorList>
    </citation>
    <scope>NUCLEOTIDE SEQUENCE [LARGE SCALE GENOMIC DNA]</scope>
    <source>
        <strain>Berkeley</strain>
    </source>
</reference>
<reference key="2">
    <citation type="journal article" date="2002" name="Genome Biol.">
        <title>Annotation of the Drosophila melanogaster euchromatic genome: a systematic review.</title>
        <authorList>
            <person name="Misra S."/>
            <person name="Crosby M.A."/>
            <person name="Mungall C.J."/>
            <person name="Matthews B.B."/>
            <person name="Campbell K.S."/>
            <person name="Hradecky P."/>
            <person name="Huang Y."/>
            <person name="Kaminker J.S."/>
            <person name="Millburn G.H."/>
            <person name="Prochnik S.E."/>
            <person name="Smith C.D."/>
            <person name="Tupy J.L."/>
            <person name="Whitfield E.J."/>
            <person name="Bayraktaroglu L."/>
            <person name="Berman B.P."/>
            <person name="Bettencourt B.R."/>
            <person name="Celniker S.E."/>
            <person name="de Grey A.D.N.J."/>
            <person name="Drysdale R.A."/>
            <person name="Harris N.L."/>
            <person name="Richter J."/>
            <person name="Russo S."/>
            <person name="Schroeder A.J."/>
            <person name="Shu S.Q."/>
            <person name="Stapleton M."/>
            <person name="Yamada C."/>
            <person name="Ashburner M."/>
            <person name="Gelbart W.M."/>
            <person name="Rubin G.M."/>
            <person name="Lewis S.E."/>
        </authorList>
    </citation>
    <scope>GENOME REANNOTATION</scope>
    <source>
        <strain>Berkeley</strain>
    </source>
</reference>
<reference key="3">
    <citation type="submission" date="2001-12" db="EMBL/GenBank/DDBJ databases">
        <authorList>
            <person name="Stapleton M."/>
            <person name="Brokstein P."/>
            <person name="Hong L."/>
            <person name="Agbayani A."/>
            <person name="Carlson J."/>
            <person name="Champe M."/>
            <person name="Chavez C."/>
            <person name="Dorsett V."/>
            <person name="Dresnek D."/>
            <person name="Farfan D."/>
            <person name="Frise E."/>
            <person name="George R."/>
            <person name="Gonzalez M."/>
            <person name="Guarin H."/>
            <person name="Kronmiller B."/>
            <person name="Li P."/>
            <person name="Liao G."/>
            <person name="Miranda A."/>
            <person name="Mungall C.J."/>
            <person name="Nunoo J."/>
            <person name="Pacleb J."/>
            <person name="Paragas V."/>
            <person name="Park S."/>
            <person name="Patel S."/>
            <person name="Phouanenavong S."/>
            <person name="Wan K."/>
            <person name="Yu C."/>
            <person name="Lewis S.E."/>
            <person name="Rubin G.M."/>
            <person name="Celniker S."/>
        </authorList>
    </citation>
    <scope>NUCLEOTIDE SEQUENCE [LARGE SCALE MRNA]</scope>
    <source>
        <strain>Berkeley</strain>
        <tissue>Embryo</tissue>
    </source>
</reference>
<reference key="4">
    <citation type="submission" date="2008-09" db="EMBL/GenBank/DDBJ databases">
        <authorList>
            <person name="Carlson J."/>
            <person name="Booth B."/>
            <person name="Frise E."/>
            <person name="Park S."/>
            <person name="Wan K."/>
            <person name="Yu C."/>
            <person name="Celniker S."/>
        </authorList>
    </citation>
    <scope>NUCLEOTIDE SEQUENCE [LARGE SCALE MRNA]</scope>
    <source>
        <strain>Berkeley</strain>
    </source>
</reference>
<reference key="5">
    <citation type="journal article" date="2024" name="Proc. Natl. Acad. Sci. U.S.A.">
        <title>Loss of the endoplasmic reticulum protein Tmem208 affects cell polarity, development, and viability.</title>
        <authorList>
            <consortium name="Undiagnosed Diseases Network"/>
            <person name="Dutta D."/>
            <person name="Kanca O."/>
            <person name="Shridharan R.V."/>
            <person name="Marcogliese P.C."/>
            <person name="Steger B."/>
            <person name="Morimoto M."/>
            <person name="Frost F.G."/>
            <person name="Macnamara E."/>
            <person name="Wangler M.F."/>
            <person name="Yamamoto S."/>
            <person name="Jenny A."/>
            <person name="Adams D."/>
            <person name="Malicdan M.C."/>
            <person name="Bellen H.J."/>
        </authorList>
    </citation>
    <scope>FUNCTION</scope>
    <scope>DISRUPTION PHENOTYPE</scope>
    <scope>SUBCELLULAR LOCATION</scope>
    <scope>INTERACTION WITH FZ</scope>
    <scope>DEVELOPMENTAL STAGE</scope>
    <scope>TISSUE SPECIFICITY</scope>
</reference>
<keyword id="KW-0256">Endoplasmic reticulum</keyword>
<keyword id="KW-0472">Membrane</keyword>
<keyword id="KW-1185">Reference proteome</keyword>
<keyword id="KW-0812">Transmembrane</keyword>
<keyword id="KW-1133">Transmembrane helix</keyword>